<feature type="signal peptide" evidence="3">
    <location>
        <begin position="1"/>
        <end position="17"/>
    </location>
</feature>
<feature type="chain" id="PRO_0000311593" description="Toxin CfTX-2" evidence="8">
    <location>
        <begin position="18"/>
        <end position="462"/>
    </location>
</feature>
<feature type="sequence conflict" description="In Ref. 1; AA sequence." evidence="7" ref="1">
    <original>L</original>
    <variation>I</variation>
    <location>
        <position position="25"/>
    </location>
</feature>
<organism>
    <name type="scientific">Chironex fleckeri</name>
    <name type="common">Australian box jellyfish</name>
    <dbReference type="NCBI Taxonomy" id="45396"/>
    <lineage>
        <taxon>Eukaryota</taxon>
        <taxon>Metazoa</taxon>
        <taxon>Cnidaria</taxon>
        <taxon>Cubozoa</taxon>
        <taxon>Chirodropida</taxon>
        <taxon>Chirodropidae</taxon>
        <taxon>Chironex</taxon>
    </lineage>
</organism>
<sequence length="462" mass="51684">MILVSLLPLLFMTGIASESTISSGLASLKAKIDIKKPTGKQLFDKVKSMEQALENKFSDDDERAKVMGAIGSLGTAIGKFQSGDPASIASGCLDILVGISSVLKDFAKFSPVFSILSLVVGLFSGTKAEESVSSVVTKAIQEQSDQELQEALYGVKREFAVSKAFLDGVRNEESDLRPTEVSALAANIPVYQGVRFIAMVVQRIKYIKPKTESEIKRMLTMLELFTDLCSIRDLILLDLHQLIATPGHSPNIASGIKEVTSLGREEYQRVFEDLLKTDDEETFLFLSYLYPKEKNEQSRKIFKFFDLIEVKYDDRFKLDLSGGQALSTLQWPNYYLCPHNDYLANNCHDLRVGLKLEKLSDGFYTIKTYGRDPRTCYWTDDYVKISSTSNGELEKFSFVPVQVKGQKAYLLSTKKWPHNFAYSQKTANGLLSILKDVPSKLGYGNQGFFTISTYSNPKNRHA</sequence>
<protein>
    <recommendedName>
        <fullName evidence="6">Toxin CfTX-2</fullName>
        <shortName evidence="6">Toxin 2</shortName>
    </recommendedName>
</protein>
<name>JTX12_CHIFL</name>
<dbReference type="EMBL" id="EF636903">
    <property type="protein sequence ID" value="ABS30941.1"/>
    <property type="molecule type" value="mRNA"/>
</dbReference>
<dbReference type="GO" id="GO:0005576">
    <property type="term" value="C:extracellular region"/>
    <property type="evidence" value="ECO:0007669"/>
    <property type="project" value="UniProtKB-SubCell"/>
</dbReference>
<dbReference type="GO" id="GO:0016020">
    <property type="term" value="C:membrane"/>
    <property type="evidence" value="ECO:0007669"/>
    <property type="project" value="UniProtKB-KW"/>
</dbReference>
<dbReference type="GO" id="GO:0042151">
    <property type="term" value="C:nematocyst"/>
    <property type="evidence" value="ECO:0007669"/>
    <property type="project" value="UniProtKB-SubCell"/>
</dbReference>
<dbReference type="GO" id="GO:0044218">
    <property type="term" value="C:other organism cell membrane"/>
    <property type="evidence" value="ECO:0007669"/>
    <property type="project" value="UniProtKB-KW"/>
</dbReference>
<dbReference type="GO" id="GO:0090729">
    <property type="term" value="F:toxin activity"/>
    <property type="evidence" value="ECO:0007669"/>
    <property type="project" value="UniProtKB-KW"/>
</dbReference>
<dbReference type="GO" id="GO:0006811">
    <property type="term" value="P:monoatomic ion transport"/>
    <property type="evidence" value="ECO:0007669"/>
    <property type="project" value="UniProtKB-KW"/>
</dbReference>
<comment type="function">
    <text evidence="2 4">May cause profound effects on the cardiovascular system of anesthetized rats (at 25 ug/kg), since the fraction containing this toxin and CfTX-1 produces an initial increase in mean arterial pressure, followed by cardiovascular collapse in all animals within 1 minute of injection (PubMed:24403082). To note, the same fraction does not induce significant change in heart rate (PubMed:24403082). Has weak hemolytic activity (PubMed:24403082). Is lethal to crayfish (By similarity). Causes cutaneous inflammation in humans (By similarity). May act as a pore-forming toxin, disrupting normal transmembrane ion concentration gradients in susceptible cells (By similarity).</text>
</comment>
<comment type="subunit">
    <text evidence="9">Oligomer.</text>
</comment>
<comment type="subcellular location">
    <subcellularLocation>
        <location evidence="3 5">Secreted</location>
    </subcellularLocation>
    <subcellularLocation>
        <location evidence="3 5">Nematocyst</location>
    </subcellularLocation>
    <subcellularLocation>
        <location evidence="1">Target cell membrane</location>
    </subcellularLocation>
    <text evidence="1">Forms a membrane channel in the prey.</text>
</comment>
<comment type="tissue specificity">
    <text evidence="7">Nematocytes.</text>
</comment>
<comment type="PTM">
    <text evidence="7">Contains disulfide bonds.</text>
</comment>
<comment type="miscellaneous">
    <text evidence="4">Negative results: the fraction containing this toxin and CfTX-1 does not cross-react with CfTX-A and CfTX-B antibodies.</text>
</comment>
<comment type="miscellaneous">
    <text evidence="5">Surprisingly, only found after chemical disruption of nematocysts, and not also after pressure disruption of nematocysts.</text>
</comment>
<comment type="similarity">
    <text evidence="9">Belongs to the jellyfish toxin family. Type I subfamily.</text>
</comment>
<accession>A7L036</accession>
<evidence type="ECO:0000250" key="1"/>
<evidence type="ECO:0000250" key="2">
    <source>
        <dbReference type="UniProtKB" id="Q9GV72"/>
    </source>
</evidence>
<evidence type="ECO:0000269" key="3">
    <source>
    </source>
</evidence>
<evidence type="ECO:0000269" key="4">
    <source>
    </source>
</evidence>
<evidence type="ECO:0000269" key="5">
    <source>
    </source>
</evidence>
<evidence type="ECO:0000303" key="6">
    <source>
    </source>
</evidence>
<evidence type="ECO:0000305" key="7"/>
<evidence type="ECO:0000305" key="8">
    <source>
    </source>
</evidence>
<evidence type="ECO:0000305" key="9">
    <source>
    </source>
</evidence>
<keyword id="KW-0123">Cardiotoxin</keyword>
<keyword id="KW-0903">Direct protein sequencing</keyword>
<keyword id="KW-1015">Disulfide bond</keyword>
<keyword id="KW-0406">Ion transport</keyword>
<keyword id="KW-0472">Membrane</keyword>
<keyword id="KW-0166">Nematocyst</keyword>
<keyword id="KW-0964">Secreted</keyword>
<keyword id="KW-0732">Signal</keyword>
<keyword id="KW-1052">Target cell membrane</keyword>
<keyword id="KW-1053">Target membrane</keyword>
<keyword id="KW-0800">Toxin</keyword>
<keyword id="KW-0812">Transmembrane</keyword>
<keyword id="KW-0813">Transport</keyword>
<proteinExistence type="evidence at protein level"/>
<reference key="1">
    <citation type="journal article" date="2007" name="Toxicon">
        <title>Identification, cloning and sequencing of two major venom proteins from the box jellyfish, Chironex fleckeri.</title>
        <authorList>
            <person name="Brinkman D."/>
            <person name="Burnell J."/>
        </authorList>
    </citation>
    <scope>NUCLEOTIDE SEQUENCE [MRNA]</scope>
    <scope>PROTEIN SEQUENCE OF 18-32</scope>
    <scope>SUBCELLULAR LOCATION</scope>
    <source>
        <tissue>Nematoblast</tissue>
    </source>
</reference>
<reference key="2">
    <citation type="journal article" date="2014" name="J. Biol. Chem.">
        <title>Chironex fleckeri (box jellyfish) venom proteins: expansion of a cnidarian toxin family that elicits variable cytolytic and cardiovascular effects.</title>
        <authorList>
            <person name="Brinkman D.L."/>
            <person name="Konstantakopoulos N."/>
            <person name="McInerney B.V."/>
            <person name="Mulvenna J."/>
            <person name="Seymour J.E."/>
            <person name="Isbister G.K."/>
            <person name="Hodgson W.C."/>
        </authorList>
    </citation>
    <scope>FUNCTION</scope>
    <scope>FAMILY</scope>
    <source>
        <tissue>Tentacle</tissue>
    </source>
</reference>
<reference key="3">
    <citation type="journal article" date="2015" name="Toxins">
        <title>Firing the sting: chemically induced discharge of cnidae reveals novel proteins and peptides from box jellyfish (Chironex fleckeri) venom.</title>
        <authorList>
            <person name="Jouiaei M."/>
            <person name="Casewell N.R."/>
            <person name="Yanagihara A.A."/>
            <person name="Nouwens A."/>
            <person name="Cribb B.W."/>
            <person name="Whitehead D."/>
            <person name="Jackson T.N."/>
            <person name="Ali S.A."/>
            <person name="Wagstaff S.C."/>
            <person name="Koludarov I."/>
            <person name="Alewood P."/>
            <person name="Hansen J."/>
            <person name="Fry B.G."/>
        </authorList>
    </citation>
    <scope>IDENTIFICATION IN TRANSCRIPTOME AND PROTEOME</scope>
    <scope>SUBCELLULAR LOCATION</scope>
    <source>
        <tissue>Tentacle</tissue>
    </source>
</reference>